<dbReference type="EMBL" id="CP001364">
    <property type="protein sequence ID" value="ACM54303.1"/>
    <property type="molecule type" value="Genomic_DNA"/>
</dbReference>
<dbReference type="SMR" id="B9LLE9"/>
<dbReference type="KEGG" id="chl:Chy400_2915"/>
<dbReference type="HOGENOM" id="CLU_115353_1_1_0"/>
<dbReference type="OrthoDB" id="9802516at2"/>
<dbReference type="GO" id="GO:0003676">
    <property type="term" value="F:nucleic acid binding"/>
    <property type="evidence" value="ECO:0007669"/>
    <property type="project" value="InterPro"/>
</dbReference>
<dbReference type="CDD" id="cd20736">
    <property type="entry name" value="PoNe_Nuclease"/>
    <property type="match status" value="1"/>
</dbReference>
<dbReference type="Gene3D" id="3.40.1350.10">
    <property type="match status" value="1"/>
</dbReference>
<dbReference type="HAMAP" id="MF_00048">
    <property type="entry name" value="UPF0102"/>
    <property type="match status" value="1"/>
</dbReference>
<dbReference type="InterPro" id="IPR011335">
    <property type="entry name" value="Restrct_endonuc-II-like"/>
</dbReference>
<dbReference type="InterPro" id="IPR011856">
    <property type="entry name" value="tRNA_endonuc-like_dom_sf"/>
</dbReference>
<dbReference type="InterPro" id="IPR003509">
    <property type="entry name" value="UPF0102_YraN-like"/>
</dbReference>
<dbReference type="NCBIfam" id="NF009150">
    <property type="entry name" value="PRK12497.1-3"/>
    <property type="match status" value="1"/>
</dbReference>
<dbReference type="NCBIfam" id="NF009154">
    <property type="entry name" value="PRK12497.3-3"/>
    <property type="match status" value="1"/>
</dbReference>
<dbReference type="NCBIfam" id="NF011271">
    <property type="entry name" value="PRK14678.1"/>
    <property type="match status" value="1"/>
</dbReference>
<dbReference type="NCBIfam" id="TIGR00252">
    <property type="entry name" value="YraN family protein"/>
    <property type="match status" value="1"/>
</dbReference>
<dbReference type="PANTHER" id="PTHR34039">
    <property type="entry name" value="UPF0102 PROTEIN YRAN"/>
    <property type="match status" value="1"/>
</dbReference>
<dbReference type="PANTHER" id="PTHR34039:SF1">
    <property type="entry name" value="UPF0102 PROTEIN YRAN"/>
    <property type="match status" value="1"/>
</dbReference>
<dbReference type="Pfam" id="PF02021">
    <property type="entry name" value="UPF0102"/>
    <property type="match status" value="1"/>
</dbReference>
<dbReference type="SUPFAM" id="SSF52980">
    <property type="entry name" value="Restriction endonuclease-like"/>
    <property type="match status" value="1"/>
</dbReference>
<comment type="similarity">
    <text evidence="1">Belongs to the UPF0102 family.</text>
</comment>
<organism>
    <name type="scientific">Chloroflexus aurantiacus (strain ATCC 29364 / DSM 637 / Y-400-fl)</name>
    <dbReference type="NCBI Taxonomy" id="480224"/>
    <lineage>
        <taxon>Bacteria</taxon>
        <taxon>Bacillati</taxon>
        <taxon>Chloroflexota</taxon>
        <taxon>Chloroflexia</taxon>
        <taxon>Chloroflexales</taxon>
        <taxon>Chloroflexineae</taxon>
        <taxon>Chloroflexaceae</taxon>
        <taxon>Chloroflexus</taxon>
    </lineage>
</organism>
<proteinExistence type="inferred from homology"/>
<accession>B9LLE9</accession>
<protein>
    <recommendedName>
        <fullName evidence="1">UPF0102 protein Chy400_2915</fullName>
    </recommendedName>
</protein>
<name>Y2915_CHLSY</name>
<sequence length="120" mass="13565">MPTPKRRLGEVGEQAAAAYLERCGYTIIARNWRCRDGEIDLVAREGDQIVFVEVRTRHDQHALETITLAKQQRLVALAYHYLSAHDLPATTRWRIDVIALTARGGRIVDYDHVIAAVGED</sequence>
<gene>
    <name type="ordered locus">Chy400_2915</name>
</gene>
<feature type="chain" id="PRO_1000200132" description="UPF0102 protein Chy400_2915">
    <location>
        <begin position="1"/>
        <end position="120"/>
    </location>
</feature>
<reference key="1">
    <citation type="submission" date="2009-01" db="EMBL/GenBank/DDBJ databases">
        <title>Complete sequence of Chloroflexus sp. Y-400-fl.</title>
        <authorList>
            <consortium name="US DOE Joint Genome Institute"/>
            <person name="Lucas S."/>
            <person name="Copeland A."/>
            <person name="Lapidus A."/>
            <person name="Glavina del Rio T."/>
            <person name="Dalin E."/>
            <person name="Tice H."/>
            <person name="Bruce D."/>
            <person name="Goodwin L."/>
            <person name="Pitluck S."/>
            <person name="Sims D."/>
            <person name="Kiss H."/>
            <person name="Brettin T."/>
            <person name="Detter J.C."/>
            <person name="Han C."/>
            <person name="Larimer F."/>
            <person name="Land M."/>
            <person name="Hauser L."/>
            <person name="Kyrpides N."/>
            <person name="Ovchinnikova G."/>
            <person name="Bryant D.A."/>
            <person name="Richardson P."/>
        </authorList>
    </citation>
    <scope>NUCLEOTIDE SEQUENCE [LARGE SCALE GENOMIC DNA]</scope>
    <source>
        <strain>ATCC 29364 / DSM 637 / Y-400-fl</strain>
    </source>
</reference>
<evidence type="ECO:0000255" key="1">
    <source>
        <dbReference type="HAMAP-Rule" id="MF_00048"/>
    </source>
</evidence>